<sequence length="337" mass="35342">MHHHLNTLYQGQSLSRESTRDAFGQVVRGEVDPIVLASLLTALKIKGETPEEIAGAAEALLAEARDFPRPDYEFCDIVGTGGDGLNTINVSTTSALVAAACGLKVAKHGNRSVSSKSGSSDLLDKMGIKLDMSPAQARHCLDKLGICFLFAPQYHAGVRHAMPVRQALKTRTLFNVLGPLINPARPTYQLMGVYAPELVRPIAETLLALGLKTGMVVHGAGLDEIAIHGPTQVAQIRDGEIREFMITPADFGLETYPVSAIQGGEPEENRAITAAILAGQGTPAHNAAIAANVAPLLLMAGKAADLKSAAAEVLAVLASGKAAELAARLATLSHQEA</sequence>
<organism>
    <name type="scientific">Aeromonas salmonicida (strain A449)</name>
    <dbReference type="NCBI Taxonomy" id="382245"/>
    <lineage>
        <taxon>Bacteria</taxon>
        <taxon>Pseudomonadati</taxon>
        <taxon>Pseudomonadota</taxon>
        <taxon>Gammaproteobacteria</taxon>
        <taxon>Aeromonadales</taxon>
        <taxon>Aeromonadaceae</taxon>
        <taxon>Aeromonas</taxon>
    </lineage>
</organism>
<reference key="1">
    <citation type="journal article" date="2008" name="BMC Genomics">
        <title>The genome of Aeromonas salmonicida subsp. salmonicida A449: insights into the evolution of a fish pathogen.</title>
        <authorList>
            <person name="Reith M.E."/>
            <person name="Singh R.K."/>
            <person name="Curtis B."/>
            <person name="Boyd J.M."/>
            <person name="Bouevitch A."/>
            <person name="Kimball J."/>
            <person name="Munholland J."/>
            <person name="Murphy C."/>
            <person name="Sarty D."/>
            <person name="Williams J."/>
            <person name="Nash J.H."/>
            <person name="Johnson S.C."/>
            <person name="Brown L.L."/>
        </authorList>
    </citation>
    <scope>NUCLEOTIDE SEQUENCE [LARGE SCALE GENOMIC DNA]</scope>
    <source>
        <strain>A449</strain>
    </source>
</reference>
<evidence type="ECO:0000255" key="1">
    <source>
        <dbReference type="HAMAP-Rule" id="MF_00211"/>
    </source>
</evidence>
<keyword id="KW-0028">Amino-acid biosynthesis</keyword>
<keyword id="KW-0057">Aromatic amino acid biosynthesis</keyword>
<keyword id="KW-0328">Glycosyltransferase</keyword>
<keyword id="KW-0460">Magnesium</keyword>
<keyword id="KW-0479">Metal-binding</keyword>
<keyword id="KW-0808">Transferase</keyword>
<keyword id="KW-0822">Tryptophan biosynthesis</keyword>
<proteinExistence type="inferred from homology"/>
<accession>A4SKT3</accession>
<feature type="chain" id="PRO_1000042984" description="Anthranilate phosphoribosyltransferase">
    <location>
        <begin position="1"/>
        <end position="337"/>
    </location>
</feature>
<feature type="binding site" evidence="1">
    <location>
        <position position="79"/>
    </location>
    <ligand>
        <name>5-phospho-alpha-D-ribose 1-diphosphate</name>
        <dbReference type="ChEBI" id="CHEBI:58017"/>
    </ligand>
</feature>
<feature type="binding site" evidence="1">
    <location>
        <position position="79"/>
    </location>
    <ligand>
        <name>anthranilate</name>
        <dbReference type="ChEBI" id="CHEBI:16567"/>
        <label>1</label>
    </ligand>
</feature>
<feature type="binding site" evidence="1">
    <location>
        <begin position="82"/>
        <end position="83"/>
    </location>
    <ligand>
        <name>5-phospho-alpha-D-ribose 1-diphosphate</name>
        <dbReference type="ChEBI" id="CHEBI:58017"/>
    </ligand>
</feature>
<feature type="binding site" evidence="1">
    <location>
        <position position="87"/>
    </location>
    <ligand>
        <name>5-phospho-alpha-D-ribose 1-diphosphate</name>
        <dbReference type="ChEBI" id="CHEBI:58017"/>
    </ligand>
</feature>
<feature type="binding site" evidence="1">
    <location>
        <begin position="89"/>
        <end position="92"/>
    </location>
    <ligand>
        <name>5-phospho-alpha-D-ribose 1-diphosphate</name>
        <dbReference type="ChEBI" id="CHEBI:58017"/>
    </ligand>
</feature>
<feature type="binding site" evidence="1">
    <location>
        <position position="91"/>
    </location>
    <ligand>
        <name>Mg(2+)</name>
        <dbReference type="ChEBI" id="CHEBI:18420"/>
        <label>1</label>
    </ligand>
</feature>
<feature type="binding site" evidence="1">
    <location>
        <begin position="107"/>
        <end position="115"/>
    </location>
    <ligand>
        <name>5-phospho-alpha-D-ribose 1-diphosphate</name>
        <dbReference type="ChEBI" id="CHEBI:58017"/>
    </ligand>
</feature>
<feature type="binding site" evidence="1">
    <location>
        <position position="110"/>
    </location>
    <ligand>
        <name>anthranilate</name>
        <dbReference type="ChEBI" id="CHEBI:16567"/>
        <label>1</label>
    </ligand>
</feature>
<feature type="binding site" evidence="1">
    <location>
        <position position="119"/>
    </location>
    <ligand>
        <name>5-phospho-alpha-D-ribose 1-diphosphate</name>
        <dbReference type="ChEBI" id="CHEBI:58017"/>
    </ligand>
</feature>
<feature type="binding site" evidence="1">
    <location>
        <position position="165"/>
    </location>
    <ligand>
        <name>anthranilate</name>
        <dbReference type="ChEBI" id="CHEBI:16567"/>
        <label>2</label>
    </ligand>
</feature>
<feature type="binding site" evidence="1">
    <location>
        <position position="223"/>
    </location>
    <ligand>
        <name>Mg(2+)</name>
        <dbReference type="ChEBI" id="CHEBI:18420"/>
        <label>2</label>
    </ligand>
</feature>
<feature type="binding site" evidence="1">
    <location>
        <position position="224"/>
    </location>
    <ligand>
        <name>Mg(2+)</name>
        <dbReference type="ChEBI" id="CHEBI:18420"/>
        <label>1</label>
    </ligand>
</feature>
<feature type="binding site" evidence="1">
    <location>
        <position position="224"/>
    </location>
    <ligand>
        <name>Mg(2+)</name>
        <dbReference type="ChEBI" id="CHEBI:18420"/>
        <label>2</label>
    </ligand>
</feature>
<name>TRPD_AERS4</name>
<comment type="function">
    <text evidence="1">Catalyzes the transfer of the phosphoribosyl group of 5-phosphorylribose-1-pyrophosphate (PRPP) to anthranilate to yield N-(5'-phosphoribosyl)-anthranilate (PRA).</text>
</comment>
<comment type="catalytic activity">
    <reaction evidence="1">
        <text>N-(5-phospho-beta-D-ribosyl)anthranilate + diphosphate = 5-phospho-alpha-D-ribose 1-diphosphate + anthranilate</text>
        <dbReference type="Rhea" id="RHEA:11768"/>
        <dbReference type="ChEBI" id="CHEBI:16567"/>
        <dbReference type="ChEBI" id="CHEBI:18277"/>
        <dbReference type="ChEBI" id="CHEBI:33019"/>
        <dbReference type="ChEBI" id="CHEBI:58017"/>
        <dbReference type="EC" id="2.4.2.18"/>
    </reaction>
</comment>
<comment type="cofactor">
    <cofactor evidence="1">
        <name>Mg(2+)</name>
        <dbReference type="ChEBI" id="CHEBI:18420"/>
    </cofactor>
    <text evidence="1">Binds 2 magnesium ions per monomer.</text>
</comment>
<comment type="pathway">
    <text evidence="1">Amino-acid biosynthesis; L-tryptophan biosynthesis; L-tryptophan from chorismate: step 2/5.</text>
</comment>
<comment type="subunit">
    <text evidence="1">Homodimer.</text>
</comment>
<comment type="similarity">
    <text evidence="1">Belongs to the anthranilate phosphoribosyltransferase family.</text>
</comment>
<dbReference type="EC" id="2.4.2.18" evidence="1"/>
<dbReference type="EMBL" id="CP000644">
    <property type="protein sequence ID" value="ABO89505.1"/>
    <property type="molecule type" value="Genomic_DNA"/>
</dbReference>
<dbReference type="RefSeq" id="WP_005319138.1">
    <property type="nucleotide sequence ID" value="NC_009348.1"/>
</dbReference>
<dbReference type="SMR" id="A4SKT3"/>
<dbReference type="STRING" id="29491.GCA_000820065_04077"/>
<dbReference type="KEGG" id="asa:ASA_1405"/>
<dbReference type="eggNOG" id="COG0547">
    <property type="taxonomic scope" value="Bacteria"/>
</dbReference>
<dbReference type="HOGENOM" id="CLU_034315_2_1_6"/>
<dbReference type="UniPathway" id="UPA00035">
    <property type="reaction ID" value="UER00041"/>
</dbReference>
<dbReference type="Proteomes" id="UP000000225">
    <property type="component" value="Chromosome"/>
</dbReference>
<dbReference type="GO" id="GO:0005829">
    <property type="term" value="C:cytosol"/>
    <property type="evidence" value="ECO:0007669"/>
    <property type="project" value="TreeGrafter"/>
</dbReference>
<dbReference type="GO" id="GO:0004048">
    <property type="term" value="F:anthranilate phosphoribosyltransferase activity"/>
    <property type="evidence" value="ECO:0007669"/>
    <property type="project" value="UniProtKB-UniRule"/>
</dbReference>
<dbReference type="GO" id="GO:0000287">
    <property type="term" value="F:magnesium ion binding"/>
    <property type="evidence" value="ECO:0007669"/>
    <property type="project" value="UniProtKB-UniRule"/>
</dbReference>
<dbReference type="GO" id="GO:0000162">
    <property type="term" value="P:L-tryptophan biosynthetic process"/>
    <property type="evidence" value="ECO:0007669"/>
    <property type="project" value="UniProtKB-UniRule"/>
</dbReference>
<dbReference type="FunFam" id="3.40.1030.10:FF:000002">
    <property type="entry name" value="Anthranilate phosphoribosyltransferase"/>
    <property type="match status" value="1"/>
</dbReference>
<dbReference type="Gene3D" id="3.40.1030.10">
    <property type="entry name" value="Nucleoside phosphorylase/phosphoribosyltransferase catalytic domain"/>
    <property type="match status" value="1"/>
</dbReference>
<dbReference type="Gene3D" id="1.20.970.10">
    <property type="entry name" value="Transferase, Pyrimidine Nucleoside Phosphorylase, Chain C"/>
    <property type="match status" value="1"/>
</dbReference>
<dbReference type="HAMAP" id="MF_00211">
    <property type="entry name" value="TrpD"/>
    <property type="match status" value="1"/>
</dbReference>
<dbReference type="InterPro" id="IPR005940">
    <property type="entry name" value="Anthranilate_Pribosyl_Tfrase"/>
</dbReference>
<dbReference type="InterPro" id="IPR000312">
    <property type="entry name" value="Glycosyl_Trfase_fam3"/>
</dbReference>
<dbReference type="InterPro" id="IPR017459">
    <property type="entry name" value="Glycosyl_Trfase_fam3_N_dom"/>
</dbReference>
<dbReference type="InterPro" id="IPR036320">
    <property type="entry name" value="Glycosyl_Trfase_fam3_N_dom_sf"/>
</dbReference>
<dbReference type="InterPro" id="IPR035902">
    <property type="entry name" value="Nuc_phospho_transferase"/>
</dbReference>
<dbReference type="NCBIfam" id="TIGR01245">
    <property type="entry name" value="trpD"/>
    <property type="match status" value="1"/>
</dbReference>
<dbReference type="PANTHER" id="PTHR43285">
    <property type="entry name" value="ANTHRANILATE PHOSPHORIBOSYLTRANSFERASE"/>
    <property type="match status" value="1"/>
</dbReference>
<dbReference type="PANTHER" id="PTHR43285:SF2">
    <property type="entry name" value="ANTHRANILATE PHOSPHORIBOSYLTRANSFERASE"/>
    <property type="match status" value="1"/>
</dbReference>
<dbReference type="Pfam" id="PF02885">
    <property type="entry name" value="Glycos_trans_3N"/>
    <property type="match status" value="1"/>
</dbReference>
<dbReference type="Pfam" id="PF00591">
    <property type="entry name" value="Glycos_transf_3"/>
    <property type="match status" value="1"/>
</dbReference>
<dbReference type="SUPFAM" id="SSF52418">
    <property type="entry name" value="Nucleoside phosphorylase/phosphoribosyltransferase catalytic domain"/>
    <property type="match status" value="1"/>
</dbReference>
<dbReference type="SUPFAM" id="SSF47648">
    <property type="entry name" value="Nucleoside phosphorylase/phosphoribosyltransferase N-terminal domain"/>
    <property type="match status" value="1"/>
</dbReference>
<protein>
    <recommendedName>
        <fullName evidence="1">Anthranilate phosphoribosyltransferase</fullName>
        <ecNumber evidence="1">2.4.2.18</ecNumber>
    </recommendedName>
</protein>
<gene>
    <name evidence="1" type="primary">trpD</name>
    <name type="ordered locus">ASA_1405</name>
</gene>